<gene>
    <name evidence="1" type="primary">nadA</name>
    <name type="ordered locus">CA_C1025</name>
</gene>
<name>NADA_CLOAB</name>
<organism>
    <name type="scientific">Clostridium acetobutylicum (strain ATCC 824 / DSM 792 / JCM 1419 / IAM 19013 / LMG 5710 / NBRC 13948 / NRRL B-527 / VKM B-1787 / 2291 / W)</name>
    <dbReference type="NCBI Taxonomy" id="272562"/>
    <lineage>
        <taxon>Bacteria</taxon>
        <taxon>Bacillati</taxon>
        <taxon>Bacillota</taxon>
        <taxon>Clostridia</taxon>
        <taxon>Eubacteriales</taxon>
        <taxon>Clostridiaceae</taxon>
        <taxon>Clostridium</taxon>
    </lineage>
</organism>
<comment type="function">
    <text evidence="1">Catalyzes the condensation of iminoaspartate with dihydroxyacetone phosphate to form quinolinate.</text>
</comment>
<comment type="catalytic activity">
    <reaction evidence="1">
        <text>iminosuccinate + dihydroxyacetone phosphate = quinolinate + phosphate + 2 H2O + H(+)</text>
        <dbReference type="Rhea" id="RHEA:25888"/>
        <dbReference type="ChEBI" id="CHEBI:15377"/>
        <dbReference type="ChEBI" id="CHEBI:15378"/>
        <dbReference type="ChEBI" id="CHEBI:29959"/>
        <dbReference type="ChEBI" id="CHEBI:43474"/>
        <dbReference type="ChEBI" id="CHEBI:57642"/>
        <dbReference type="ChEBI" id="CHEBI:77875"/>
        <dbReference type="EC" id="2.5.1.72"/>
    </reaction>
    <physiologicalReaction direction="left-to-right" evidence="1">
        <dbReference type="Rhea" id="RHEA:25889"/>
    </physiologicalReaction>
</comment>
<comment type="cofactor">
    <cofactor evidence="1">
        <name>[4Fe-4S] cluster</name>
        <dbReference type="ChEBI" id="CHEBI:49883"/>
    </cofactor>
    <text evidence="1">Binds 1 [4Fe-4S] cluster per subunit.</text>
</comment>
<comment type="pathway">
    <text evidence="1">Cofactor biosynthesis; NAD(+) biosynthesis; quinolinate from iminoaspartate: step 1/1.</text>
</comment>
<comment type="subcellular location">
    <subcellularLocation>
        <location evidence="1">Cytoplasm</location>
    </subcellularLocation>
</comment>
<comment type="similarity">
    <text evidence="1">Belongs to the quinolinate synthase family. Type 2 subfamily.</text>
</comment>
<evidence type="ECO:0000255" key="1">
    <source>
        <dbReference type="HAMAP-Rule" id="MF_00568"/>
    </source>
</evidence>
<sequence length="303" mass="34190">MDQNLKEQILELKRQKNAIILAHYYQRPEVQEIADFIGDSYNLSKIAKENDADTIVFCGVKFMAESAKVLSPQKKVLLPQPKAGCPMADMADAEGLAALKAKHPNAKVVSYINSSVEVKALCDTCCTSSNAAKIVKRIDSDEIIFLPDKNLGSYVQEMVPEKNIILWDGFCKVHNMIIPTDIEEMKNKYGDMKILAHPECWKPVRDMADFIGSTGAMIDYAEKDTTSDKYLVVTETGIMYKMQERVPNKTFYPLRSMVCVNMKATHLEDVYNSLVNSTFEINIEENLRQKALTSLENMLILGR</sequence>
<protein>
    <recommendedName>
        <fullName evidence="1">Quinolinate synthase</fullName>
        <ecNumber evidence="1">2.5.1.72</ecNumber>
    </recommendedName>
</protein>
<reference key="1">
    <citation type="journal article" date="2001" name="J. Bacteriol.">
        <title>Genome sequence and comparative analysis of the solvent-producing bacterium Clostridium acetobutylicum.</title>
        <authorList>
            <person name="Noelling J."/>
            <person name="Breton G."/>
            <person name="Omelchenko M.V."/>
            <person name="Makarova K.S."/>
            <person name="Zeng Q."/>
            <person name="Gibson R."/>
            <person name="Lee H.M."/>
            <person name="Dubois J."/>
            <person name="Qiu D."/>
            <person name="Hitti J."/>
            <person name="Wolf Y.I."/>
            <person name="Tatusov R.L."/>
            <person name="Sabathe F."/>
            <person name="Doucette-Stamm L.A."/>
            <person name="Soucaille P."/>
            <person name="Daly M.J."/>
            <person name="Bennett G.N."/>
            <person name="Koonin E.V."/>
            <person name="Smith D.R."/>
        </authorList>
    </citation>
    <scope>NUCLEOTIDE SEQUENCE [LARGE SCALE GENOMIC DNA]</scope>
    <source>
        <strain>ATCC 824 / DSM 792 / JCM 1419 / IAM 19013 / LMG 5710 / NBRC 13948 / NRRL B-527 / VKM B-1787 / 2291 / W</strain>
    </source>
</reference>
<accession>Q97K94</accession>
<dbReference type="EC" id="2.5.1.72" evidence="1"/>
<dbReference type="EMBL" id="AE001437">
    <property type="protein sequence ID" value="AAK79001.1"/>
    <property type="molecule type" value="Genomic_DNA"/>
</dbReference>
<dbReference type="PIR" id="F97026">
    <property type="entry name" value="F97026"/>
</dbReference>
<dbReference type="RefSeq" id="NP_347661.1">
    <property type="nucleotide sequence ID" value="NC_003030.1"/>
</dbReference>
<dbReference type="RefSeq" id="WP_010964343.1">
    <property type="nucleotide sequence ID" value="NC_003030.1"/>
</dbReference>
<dbReference type="SMR" id="Q97K94"/>
<dbReference type="STRING" id="272562.CA_C1025"/>
<dbReference type="GeneID" id="44997539"/>
<dbReference type="KEGG" id="cac:CA_C1025"/>
<dbReference type="PATRIC" id="fig|272562.8.peg.1233"/>
<dbReference type="eggNOG" id="COG0379">
    <property type="taxonomic scope" value="Bacteria"/>
</dbReference>
<dbReference type="HOGENOM" id="CLU_047382_0_0_9"/>
<dbReference type="OrthoDB" id="9801204at2"/>
<dbReference type="UniPathway" id="UPA00253">
    <property type="reaction ID" value="UER00327"/>
</dbReference>
<dbReference type="Proteomes" id="UP000000814">
    <property type="component" value="Chromosome"/>
</dbReference>
<dbReference type="GO" id="GO:0005829">
    <property type="term" value="C:cytosol"/>
    <property type="evidence" value="ECO:0007669"/>
    <property type="project" value="TreeGrafter"/>
</dbReference>
<dbReference type="GO" id="GO:0051539">
    <property type="term" value="F:4 iron, 4 sulfur cluster binding"/>
    <property type="evidence" value="ECO:0007669"/>
    <property type="project" value="UniProtKB-KW"/>
</dbReference>
<dbReference type="GO" id="GO:0046872">
    <property type="term" value="F:metal ion binding"/>
    <property type="evidence" value="ECO:0007669"/>
    <property type="project" value="UniProtKB-KW"/>
</dbReference>
<dbReference type="GO" id="GO:0008987">
    <property type="term" value="F:quinolinate synthetase A activity"/>
    <property type="evidence" value="ECO:0007669"/>
    <property type="project" value="UniProtKB-UniRule"/>
</dbReference>
<dbReference type="GO" id="GO:0034628">
    <property type="term" value="P:'de novo' NAD biosynthetic process from L-aspartate"/>
    <property type="evidence" value="ECO:0007669"/>
    <property type="project" value="TreeGrafter"/>
</dbReference>
<dbReference type="FunFam" id="3.40.50.10800:FF:000003">
    <property type="entry name" value="Quinolinate synthase A"/>
    <property type="match status" value="1"/>
</dbReference>
<dbReference type="Gene3D" id="3.40.50.10800">
    <property type="entry name" value="NadA-like"/>
    <property type="match status" value="3"/>
</dbReference>
<dbReference type="HAMAP" id="MF_00568">
    <property type="entry name" value="NadA_type2"/>
    <property type="match status" value="1"/>
</dbReference>
<dbReference type="InterPro" id="IPR003473">
    <property type="entry name" value="NadA"/>
</dbReference>
<dbReference type="InterPro" id="IPR036094">
    <property type="entry name" value="NadA_sf"/>
</dbReference>
<dbReference type="InterPro" id="IPR023066">
    <property type="entry name" value="Quinolinate_synth_type2"/>
</dbReference>
<dbReference type="NCBIfam" id="TIGR00550">
    <property type="entry name" value="nadA"/>
    <property type="match status" value="1"/>
</dbReference>
<dbReference type="NCBIfam" id="NF006878">
    <property type="entry name" value="PRK09375.1-2"/>
    <property type="match status" value="1"/>
</dbReference>
<dbReference type="PANTHER" id="PTHR30573:SF0">
    <property type="entry name" value="QUINOLINATE SYNTHASE, CHLOROPLASTIC"/>
    <property type="match status" value="1"/>
</dbReference>
<dbReference type="PANTHER" id="PTHR30573">
    <property type="entry name" value="QUINOLINATE SYNTHETASE A"/>
    <property type="match status" value="1"/>
</dbReference>
<dbReference type="Pfam" id="PF02445">
    <property type="entry name" value="NadA"/>
    <property type="match status" value="1"/>
</dbReference>
<dbReference type="SUPFAM" id="SSF142754">
    <property type="entry name" value="NadA-like"/>
    <property type="match status" value="1"/>
</dbReference>
<proteinExistence type="inferred from homology"/>
<feature type="chain" id="PRO_0000155784" description="Quinolinate synthase">
    <location>
        <begin position="1"/>
        <end position="303"/>
    </location>
</feature>
<feature type="binding site" evidence="1">
    <location>
        <position position="23"/>
    </location>
    <ligand>
        <name>iminosuccinate</name>
        <dbReference type="ChEBI" id="CHEBI:77875"/>
    </ligand>
</feature>
<feature type="binding site" evidence="1">
    <location>
        <position position="40"/>
    </location>
    <ligand>
        <name>iminosuccinate</name>
        <dbReference type="ChEBI" id="CHEBI:77875"/>
    </ligand>
</feature>
<feature type="binding site" evidence="1">
    <location>
        <position position="85"/>
    </location>
    <ligand>
        <name>[4Fe-4S] cluster</name>
        <dbReference type="ChEBI" id="CHEBI:49883"/>
    </ligand>
</feature>
<feature type="binding site" evidence="1">
    <location>
        <begin position="111"/>
        <end position="113"/>
    </location>
    <ligand>
        <name>iminosuccinate</name>
        <dbReference type="ChEBI" id="CHEBI:77875"/>
    </ligand>
</feature>
<feature type="binding site" evidence="1">
    <location>
        <position position="128"/>
    </location>
    <ligand>
        <name>iminosuccinate</name>
        <dbReference type="ChEBI" id="CHEBI:77875"/>
    </ligand>
</feature>
<feature type="binding site" evidence="1">
    <location>
        <position position="171"/>
    </location>
    <ligand>
        <name>[4Fe-4S] cluster</name>
        <dbReference type="ChEBI" id="CHEBI:49883"/>
    </ligand>
</feature>
<feature type="binding site" evidence="1">
    <location>
        <begin position="197"/>
        <end position="199"/>
    </location>
    <ligand>
        <name>iminosuccinate</name>
        <dbReference type="ChEBI" id="CHEBI:77875"/>
    </ligand>
</feature>
<feature type="binding site" evidence="1">
    <location>
        <position position="214"/>
    </location>
    <ligand>
        <name>iminosuccinate</name>
        <dbReference type="ChEBI" id="CHEBI:77875"/>
    </ligand>
</feature>
<feature type="binding site" evidence="1">
    <location>
        <position position="259"/>
    </location>
    <ligand>
        <name>[4Fe-4S] cluster</name>
        <dbReference type="ChEBI" id="CHEBI:49883"/>
    </ligand>
</feature>
<keyword id="KW-0004">4Fe-4S</keyword>
<keyword id="KW-0963">Cytoplasm</keyword>
<keyword id="KW-0408">Iron</keyword>
<keyword id="KW-0411">Iron-sulfur</keyword>
<keyword id="KW-0479">Metal-binding</keyword>
<keyword id="KW-0662">Pyridine nucleotide biosynthesis</keyword>
<keyword id="KW-1185">Reference proteome</keyword>
<keyword id="KW-0808">Transferase</keyword>